<dbReference type="EMBL" id="CP001176">
    <property type="protein sequence ID" value="ACK59060.1"/>
    <property type="molecule type" value="Genomic_DNA"/>
</dbReference>
<dbReference type="RefSeq" id="WP_000487015.1">
    <property type="nucleotide sequence ID" value="NC_011725.1"/>
</dbReference>
<dbReference type="SMR" id="B7HCS2"/>
<dbReference type="KEGG" id="bcb:BCB4264_A4415"/>
<dbReference type="HOGENOM" id="CLU_066632_4_0_9"/>
<dbReference type="Proteomes" id="UP000007096">
    <property type="component" value="Chromosome"/>
</dbReference>
<dbReference type="GO" id="GO:0043590">
    <property type="term" value="C:bacterial nucleoid"/>
    <property type="evidence" value="ECO:0007669"/>
    <property type="project" value="TreeGrafter"/>
</dbReference>
<dbReference type="GO" id="GO:0006310">
    <property type="term" value="P:DNA recombination"/>
    <property type="evidence" value="ECO:0007669"/>
    <property type="project" value="UniProtKB-UniRule"/>
</dbReference>
<dbReference type="GO" id="GO:0006302">
    <property type="term" value="P:double-strand break repair"/>
    <property type="evidence" value="ECO:0007669"/>
    <property type="project" value="TreeGrafter"/>
</dbReference>
<dbReference type="Gene3D" id="2.40.50.140">
    <property type="entry name" value="Nucleic acid-binding proteins"/>
    <property type="match status" value="1"/>
</dbReference>
<dbReference type="Gene3D" id="1.20.1440.120">
    <property type="entry name" value="Recombination protein O, C-terminal domain"/>
    <property type="match status" value="1"/>
</dbReference>
<dbReference type="HAMAP" id="MF_00201">
    <property type="entry name" value="RecO"/>
    <property type="match status" value="1"/>
</dbReference>
<dbReference type="InterPro" id="IPR037278">
    <property type="entry name" value="ARFGAP/RecO"/>
</dbReference>
<dbReference type="InterPro" id="IPR022572">
    <property type="entry name" value="DNA_rep/recomb_RecO_N"/>
</dbReference>
<dbReference type="InterPro" id="IPR012340">
    <property type="entry name" value="NA-bd_OB-fold"/>
</dbReference>
<dbReference type="InterPro" id="IPR003717">
    <property type="entry name" value="RecO"/>
</dbReference>
<dbReference type="InterPro" id="IPR042242">
    <property type="entry name" value="RecO_C"/>
</dbReference>
<dbReference type="NCBIfam" id="TIGR00613">
    <property type="entry name" value="reco"/>
    <property type="match status" value="1"/>
</dbReference>
<dbReference type="PANTHER" id="PTHR33991">
    <property type="entry name" value="DNA REPAIR PROTEIN RECO"/>
    <property type="match status" value="1"/>
</dbReference>
<dbReference type="PANTHER" id="PTHR33991:SF1">
    <property type="entry name" value="DNA REPAIR PROTEIN RECO"/>
    <property type="match status" value="1"/>
</dbReference>
<dbReference type="Pfam" id="PF02565">
    <property type="entry name" value="RecO_C"/>
    <property type="match status" value="1"/>
</dbReference>
<dbReference type="Pfam" id="PF11967">
    <property type="entry name" value="RecO_N"/>
    <property type="match status" value="1"/>
</dbReference>
<dbReference type="SUPFAM" id="SSF57863">
    <property type="entry name" value="ArfGap/RecO-like zinc finger"/>
    <property type="match status" value="1"/>
</dbReference>
<dbReference type="SUPFAM" id="SSF50249">
    <property type="entry name" value="Nucleic acid-binding proteins"/>
    <property type="match status" value="1"/>
</dbReference>
<accession>B7HCS2</accession>
<protein>
    <recommendedName>
        <fullName evidence="1">DNA repair protein RecO</fullName>
    </recommendedName>
    <alternativeName>
        <fullName evidence="1">Recombination protein O</fullName>
    </alternativeName>
</protein>
<organism>
    <name type="scientific">Bacillus cereus (strain B4264)</name>
    <dbReference type="NCBI Taxonomy" id="405532"/>
    <lineage>
        <taxon>Bacteria</taxon>
        <taxon>Bacillati</taxon>
        <taxon>Bacillota</taxon>
        <taxon>Bacilli</taxon>
        <taxon>Bacillales</taxon>
        <taxon>Bacillaceae</taxon>
        <taxon>Bacillus</taxon>
        <taxon>Bacillus cereus group</taxon>
    </lineage>
</organism>
<keyword id="KW-0227">DNA damage</keyword>
<keyword id="KW-0233">DNA recombination</keyword>
<keyword id="KW-0234">DNA repair</keyword>
<evidence type="ECO:0000255" key="1">
    <source>
        <dbReference type="HAMAP-Rule" id="MF_00201"/>
    </source>
</evidence>
<name>RECO_BACC4</name>
<proteinExistence type="inferred from homology"/>
<gene>
    <name evidence="1" type="primary">recO</name>
    <name type="ordered locus">BCB4264_A4415</name>
</gene>
<comment type="function">
    <text evidence="1">Involved in DNA repair and RecF pathway recombination.</text>
</comment>
<comment type="similarity">
    <text evidence="1">Belongs to the RecO family.</text>
</comment>
<reference key="1">
    <citation type="submission" date="2008-10" db="EMBL/GenBank/DDBJ databases">
        <title>Genome sequence of Bacillus cereus B4264.</title>
        <authorList>
            <person name="Dodson R.J."/>
            <person name="Durkin A.S."/>
            <person name="Rosovitz M.J."/>
            <person name="Rasko D.A."/>
            <person name="Hoffmaster A."/>
            <person name="Ravel J."/>
            <person name="Sutton G."/>
        </authorList>
    </citation>
    <scope>NUCLEOTIDE SEQUENCE [LARGE SCALE GENOMIC DNA]</scope>
    <source>
        <strain>B4264</strain>
    </source>
</reference>
<feature type="chain" id="PRO_1000118709" description="DNA repair protein RecO">
    <location>
        <begin position="1"/>
        <end position="248"/>
    </location>
</feature>
<sequence length="248" mass="28634">MFQKVEGIVIRTTDYGETNKIVTIFSRELGKVSAMARGSKKPKSRLASVSQLMTHGHFLIQMGSGLGTLQQGEIISTMKEIREDIFLTAYASFIVELTDKATEDKKHNPYLFEMLYQTLHYMCEGVDPEVLSLIYQTKMLPVLGMRPYFDTCAICHQETDFVAFSVREGGFLCSRHAEQDPYRIPVGEAVHKLLRLFFHFDLHRLGNVSVKDSTKKQMRLVLNTYYDEYCGIYLKSRRFLEQLDKFQI</sequence>